<organism>
    <name type="scientific">Campylobacter concisus (strain 13826)</name>
    <dbReference type="NCBI Taxonomy" id="360104"/>
    <lineage>
        <taxon>Bacteria</taxon>
        <taxon>Pseudomonadati</taxon>
        <taxon>Campylobacterota</taxon>
        <taxon>Epsilonproteobacteria</taxon>
        <taxon>Campylobacterales</taxon>
        <taxon>Campylobacteraceae</taxon>
        <taxon>Campylobacter</taxon>
    </lineage>
</organism>
<keyword id="KW-0028">Amino-acid biosynthesis</keyword>
<keyword id="KW-0067">ATP-binding</keyword>
<keyword id="KW-0963">Cytoplasm</keyword>
<keyword id="KW-0418">Kinase</keyword>
<keyword id="KW-0547">Nucleotide-binding</keyword>
<keyword id="KW-0791">Threonine biosynthesis</keyword>
<keyword id="KW-0808">Transferase</keyword>
<name>KHSE_CAMC1</name>
<gene>
    <name evidence="1" type="primary">thrB</name>
    <name type="ordered locus">Ccon26_04740</name>
    <name type="ORF">CCC13826_1493</name>
</gene>
<dbReference type="EC" id="2.7.1.39" evidence="1"/>
<dbReference type="EMBL" id="CP000792">
    <property type="protein sequence ID" value="EAT99022.1"/>
    <property type="molecule type" value="Genomic_DNA"/>
</dbReference>
<dbReference type="RefSeq" id="WP_012001355.1">
    <property type="nucleotide sequence ID" value="NC_009802.2"/>
</dbReference>
<dbReference type="SMR" id="A7ZC67"/>
<dbReference type="STRING" id="360104.CCC13826_1493"/>
<dbReference type="KEGG" id="cco:CCC13826_1493"/>
<dbReference type="eggNOG" id="COG0083">
    <property type="taxonomic scope" value="Bacteria"/>
</dbReference>
<dbReference type="HOGENOM" id="CLU_041243_0_0_7"/>
<dbReference type="OrthoDB" id="9769912at2"/>
<dbReference type="UniPathway" id="UPA00050">
    <property type="reaction ID" value="UER00064"/>
</dbReference>
<dbReference type="Proteomes" id="UP000001121">
    <property type="component" value="Chromosome"/>
</dbReference>
<dbReference type="GO" id="GO:0005737">
    <property type="term" value="C:cytoplasm"/>
    <property type="evidence" value="ECO:0007669"/>
    <property type="project" value="UniProtKB-SubCell"/>
</dbReference>
<dbReference type="GO" id="GO:0005524">
    <property type="term" value="F:ATP binding"/>
    <property type="evidence" value="ECO:0007669"/>
    <property type="project" value="UniProtKB-UniRule"/>
</dbReference>
<dbReference type="GO" id="GO:0004413">
    <property type="term" value="F:homoserine kinase activity"/>
    <property type="evidence" value="ECO:0007669"/>
    <property type="project" value="UniProtKB-UniRule"/>
</dbReference>
<dbReference type="GO" id="GO:0009088">
    <property type="term" value="P:threonine biosynthetic process"/>
    <property type="evidence" value="ECO:0007669"/>
    <property type="project" value="UniProtKB-UniRule"/>
</dbReference>
<dbReference type="Gene3D" id="3.30.230.10">
    <property type="match status" value="1"/>
</dbReference>
<dbReference type="Gene3D" id="3.30.70.890">
    <property type="entry name" value="GHMP kinase, C-terminal domain"/>
    <property type="match status" value="1"/>
</dbReference>
<dbReference type="HAMAP" id="MF_00384">
    <property type="entry name" value="Homoser_kinase"/>
    <property type="match status" value="1"/>
</dbReference>
<dbReference type="InterPro" id="IPR013750">
    <property type="entry name" value="GHMP_kinase_C_dom"/>
</dbReference>
<dbReference type="InterPro" id="IPR036554">
    <property type="entry name" value="GHMP_kinase_C_sf"/>
</dbReference>
<dbReference type="InterPro" id="IPR006204">
    <property type="entry name" value="GHMP_kinase_N_dom"/>
</dbReference>
<dbReference type="InterPro" id="IPR006203">
    <property type="entry name" value="GHMP_knse_ATP-bd_CS"/>
</dbReference>
<dbReference type="InterPro" id="IPR000870">
    <property type="entry name" value="Homoserine_kinase"/>
</dbReference>
<dbReference type="InterPro" id="IPR020568">
    <property type="entry name" value="Ribosomal_Su5_D2-typ_SF"/>
</dbReference>
<dbReference type="InterPro" id="IPR014721">
    <property type="entry name" value="Ribsml_uS5_D2-typ_fold_subgr"/>
</dbReference>
<dbReference type="NCBIfam" id="TIGR00191">
    <property type="entry name" value="thrB"/>
    <property type="match status" value="1"/>
</dbReference>
<dbReference type="PANTHER" id="PTHR20861:SF1">
    <property type="entry name" value="HOMOSERINE KINASE"/>
    <property type="match status" value="1"/>
</dbReference>
<dbReference type="PANTHER" id="PTHR20861">
    <property type="entry name" value="HOMOSERINE/4-DIPHOSPHOCYTIDYL-2-C-METHYL-D-ERYTHRITOL KINASE"/>
    <property type="match status" value="1"/>
</dbReference>
<dbReference type="Pfam" id="PF08544">
    <property type="entry name" value="GHMP_kinases_C"/>
    <property type="match status" value="1"/>
</dbReference>
<dbReference type="Pfam" id="PF00288">
    <property type="entry name" value="GHMP_kinases_N"/>
    <property type="match status" value="1"/>
</dbReference>
<dbReference type="PIRSF" id="PIRSF000676">
    <property type="entry name" value="Homoser_kin"/>
    <property type="match status" value="1"/>
</dbReference>
<dbReference type="PRINTS" id="PR00958">
    <property type="entry name" value="HOMSERKINASE"/>
</dbReference>
<dbReference type="SUPFAM" id="SSF55060">
    <property type="entry name" value="GHMP Kinase, C-terminal domain"/>
    <property type="match status" value="1"/>
</dbReference>
<dbReference type="SUPFAM" id="SSF54211">
    <property type="entry name" value="Ribosomal protein S5 domain 2-like"/>
    <property type="match status" value="1"/>
</dbReference>
<dbReference type="PROSITE" id="PS00627">
    <property type="entry name" value="GHMP_KINASES_ATP"/>
    <property type="match status" value="1"/>
</dbReference>
<protein>
    <recommendedName>
        <fullName evidence="1">Homoserine kinase</fullName>
        <shortName evidence="1">HK</shortName>
        <shortName evidence="1">HSK</shortName>
        <ecNumber evidence="1">2.7.1.39</ecNumber>
    </recommendedName>
</protein>
<comment type="function">
    <text evidence="1">Catalyzes the ATP-dependent phosphorylation of L-homoserine to L-homoserine phosphate.</text>
</comment>
<comment type="catalytic activity">
    <reaction evidence="1">
        <text>L-homoserine + ATP = O-phospho-L-homoserine + ADP + H(+)</text>
        <dbReference type="Rhea" id="RHEA:13985"/>
        <dbReference type="ChEBI" id="CHEBI:15378"/>
        <dbReference type="ChEBI" id="CHEBI:30616"/>
        <dbReference type="ChEBI" id="CHEBI:57476"/>
        <dbReference type="ChEBI" id="CHEBI:57590"/>
        <dbReference type="ChEBI" id="CHEBI:456216"/>
        <dbReference type="EC" id="2.7.1.39"/>
    </reaction>
</comment>
<comment type="pathway">
    <text evidence="1">Amino-acid biosynthesis; L-threonine biosynthesis; L-threonine from L-aspartate: step 4/5.</text>
</comment>
<comment type="subcellular location">
    <subcellularLocation>
        <location evidence="1">Cytoplasm</location>
    </subcellularLocation>
</comment>
<comment type="similarity">
    <text evidence="1">Belongs to the GHMP kinase family. Homoserine kinase subfamily.</text>
</comment>
<sequence length="294" mass="32279">MNILIPATSANLGPGFDALGLSLKLFNSVKIEPSKFSSVSINGEGSDSTNLKRNNIFLSIFNEIFLELTGKNENFRIVFENNIPFSRGLGSSSAVIVGAIASAYEMAGFKASKSVVLNKAIIYETHPDNISPAVHGGFISAVVKNGNVYANKINLSDDIKAVVVIPNKPMSTASSRQILPKNYTMKECVNNLSHAAFLTSCFYEKRYDLLRVASEDMMHEERRMSALKELFEVRKVAYENGALMSTLSGSGSSFLNIAYKDDAKNLQDALKSKFGDFRVEIFSFDNDGYEITQS</sequence>
<evidence type="ECO:0000255" key="1">
    <source>
        <dbReference type="HAMAP-Rule" id="MF_00384"/>
    </source>
</evidence>
<accession>A7ZC67</accession>
<reference key="1">
    <citation type="submission" date="2007-10" db="EMBL/GenBank/DDBJ databases">
        <title>Genome sequence of Campylobacter concisus 13826 isolated from human feces.</title>
        <authorList>
            <person name="Fouts D.E."/>
            <person name="Mongodin E.F."/>
            <person name="Puiu D."/>
            <person name="Sebastian Y."/>
            <person name="Miller W.G."/>
            <person name="Mandrell R.E."/>
            <person name="On S."/>
            <person name="Nelson K.E."/>
        </authorList>
    </citation>
    <scope>NUCLEOTIDE SEQUENCE [LARGE SCALE GENOMIC DNA]</scope>
    <source>
        <strain>13826</strain>
    </source>
</reference>
<feature type="chain" id="PRO_1000049113" description="Homoserine kinase">
    <location>
        <begin position="1"/>
        <end position="294"/>
    </location>
</feature>
<feature type="binding site" evidence="1">
    <location>
        <begin position="84"/>
        <end position="94"/>
    </location>
    <ligand>
        <name>ATP</name>
        <dbReference type="ChEBI" id="CHEBI:30616"/>
    </ligand>
</feature>
<proteinExistence type="inferred from homology"/>